<proteinExistence type="evidence at protein level"/>
<name>SHIP2_MOUSE</name>
<gene>
    <name evidence="28" type="primary">Inppl1</name>
    <name evidence="24" type="synonym">Ship2</name>
</gene>
<comment type="function">
    <text evidence="3 4 6 11 12 13 15 16 18 19 20 22">Phosphatidylinositol (PtdIns) phosphatase that specifically hydrolyzes the 5-phosphate of phosphatidylinositol-3,4,5-trisphosphate (PtdIns(3,4,5)P3) to produce PtdIns(3,4)P2, thereby negatively regulating the PI3K (phosphoinositide 3-kinase) pathways (PubMed:10958682). Required for correct mitotic spindle orientation and therefore progression of mitosis (By similarity). Plays a central role in regulation of PI3K-dependent insulin signaling, although the precise molecular mechanisms and signaling pathways remain unclear (PubMed:11343120). While overexpression reduces both insulin-stimulated MAP kinase and Akt activation, its absence does not affect insulin signaling or GLUT4 trafficking (PubMed:14744864). Confers resistance to dietary obesity (PubMed:15654325). May act by regulating AKT2, but not AKT1, phosphorylation at the plasma membrane (PubMed:14744864). Part of a signaling pathway that regulates actin cytoskeleton remodeling (By similarity). Required for the maintenance and dynamic remodeling of actin structures as well as in endocytosis, having a major impact on ligand-induced EGFR internalization and degradation (By similarity). Participates in regulation of cortical and submembraneous actin by hydrolyzing PtdIns(3,4,5)P3 thereby regulating membrane ruffling (By similarity). Regulates cell adhesion and cell spreading (PubMed:29749928). Required for HGF-mediated lamellipodium formation, cell scattering and spreading (By similarity). Acts as a negative regulator of EPHA2 receptor endocytosis by inhibiting via PI3K-dependent Rac1 activation (By similarity). Acts as a regulator of neuritogenesis by regulating PtdIns(3,4,5)P3 level and is required to form an initial protrusive pattern, and later, maintain proper neurite outgrowth (By similarity). Acts as a negative regulator of the FC-gamma-RIIA receptor (FCGR2A) (By similarity). Mediates signaling from the FC-gamma-RIIB receptor (FCGR2B), playing a central role in terminating signal transduction from activating immune/hematopoietic cell receptor systems (PubMed:10789675, PubMed:15456754). Upon stimulation by EGF, it is recruited by EGFR and dephosphorylates PtdIns(3,4,5)P3 (By similarity). Plays a negative role in regulating the PI3K-PKB pathway, possibly by inhibiting PKB activity (By similarity). Down-regulates Fc-gamma-R-mediated phagocytosis in macrophages independently of INPP5D/SHIP1 (PubMed:15557176, PubMed:16179375). In macrophages, down-regulates NF-kappa-B-dependent gene transcription by regulating macrophage colony-stimulating factor (M-CSF)-induced signaling (PubMed:15557176, PubMed:16179375). Plays a role in the localization of AURKA and NEDD9/HEF1 to the basolateral membrane at interphase in polarized cysts, thereby mediates cell cycle homeostasis, cell polarization and cilia assembly (By similarity). Additionally promotion of cilia growth is also facilitated by hydrolysis of (PtdIns(3,4,5)P3) to PtdIns(3,4)P2 (By similarity). Promotes formation of apical membrane-initiation sites during the initial stages of lumen formation via Rho family-induced actin filament organization and CTNNB1 localization to cell-cell contacts (By similarity). May also hydrolyze PtdIns(1,3,4,5)P4, and could thus affect the levels of the higher inositol polyphosphates like InsP6. Involved in endochondral ossification (By similarity).</text>
</comment>
<comment type="catalytic activity">
    <reaction evidence="12">
        <text>a 1,2-diacyl-sn-glycero-3-phospho-(1D-myo-inositol-3,4,5-trisphosphate) + H2O = a 1,2-diacyl-sn-glycero-3-phospho-(1D-myo-inositol-3,4-bisphosphate) + phosphate</text>
        <dbReference type="Rhea" id="RHEA:25528"/>
        <dbReference type="ChEBI" id="CHEBI:15377"/>
        <dbReference type="ChEBI" id="CHEBI:43474"/>
        <dbReference type="ChEBI" id="CHEBI:57658"/>
        <dbReference type="ChEBI" id="CHEBI:57836"/>
        <dbReference type="EC" id="3.1.3.86"/>
    </reaction>
    <physiologicalReaction direction="left-to-right" evidence="27">
        <dbReference type="Rhea" id="RHEA:25529"/>
    </physiologicalReaction>
</comment>
<comment type="catalytic activity">
    <reaction evidence="4">
        <text>1,2-dioctanoyl-sn-glycero-3-phospho-(1D-myo-inositol-3,4,5-trisphosphate) + H2O = 1,2-dioctanoyl-sn-glycero-3-phospho-(1D-myo-inositol-3,4-bisphosphate) + phosphate</text>
        <dbReference type="Rhea" id="RHEA:43548"/>
        <dbReference type="ChEBI" id="CHEBI:15377"/>
        <dbReference type="ChEBI" id="CHEBI:43474"/>
        <dbReference type="ChEBI" id="CHEBI:83416"/>
        <dbReference type="ChEBI" id="CHEBI:83417"/>
    </reaction>
    <physiologicalReaction direction="left-to-right" evidence="4">
        <dbReference type="Rhea" id="RHEA:43549"/>
    </physiologicalReaction>
</comment>
<comment type="catalytic activity">
    <reaction evidence="4">
        <text>1,2-dihexadecanoyl-sn-glycero-3-phospho-(1D-myo-inositol-3,4,5-trisphosphate) + H2O = 1,2-dihexadecanoyl-sn-glycero-3-phospho-(1D-myo-inositol-3,4-bisphosphate) + phosphate</text>
        <dbReference type="Rhea" id="RHEA:43556"/>
        <dbReference type="ChEBI" id="CHEBI:15377"/>
        <dbReference type="ChEBI" id="CHEBI:43474"/>
        <dbReference type="ChEBI" id="CHEBI:83420"/>
        <dbReference type="ChEBI" id="CHEBI:83422"/>
    </reaction>
    <physiologicalReaction direction="left-to-right" evidence="4">
        <dbReference type="Rhea" id="RHEA:43557"/>
    </physiologicalReaction>
</comment>
<comment type="activity regulation">
    <text evidence="1">Activated upon translocation to the sites of synthesis of PtdIns(3,4,5)P3 in the membrane. Enzymatic activity is enhanced in the presence of phosphatidylserine (By similarity).</text>
</comment>
<comment type="subunit">
    <text evidence="3 4 11 16 17 18 21 22 23">Interacts with tyrosine phosphorylated form of SHC1 (By similarity). Interacts with EGFR (By similarity). Upon stimulation by the EGF signaling pathway, it forms a complex with SHC1 and EGFR (By similarity). Interacts with cytoskeletal protein SORBS3/vinexin, promoting its localization to the periphery of cells (By similarity). Forms a complex with filamin (FLNA or FLNB), actin, GPIb (GP1BA or GP1BB) that regulates cortical and submembraneous actin (By similarity). Interacts with c-Met/MET, when c-Met/MET is phosphorylated on 'Tyr-1356' (By similarity). Interacts with p130Cas/BCAR1 (By similarity). Interacts with CENTD3/ARAP3 via its SAM domain (By similarity). Interacts with c-Cbl/CBL and CAP/SORBS1 (By similarity). Interacts with activated EPHA2 receptor (PubMed:29749928). Interacts with receptors FCGR2A (By similarity). Interacts with FCGR2B (PubMed:10789675, PubMed:15456754). Interacts with tyrosine kinase ABL1 (By similarity). Interacts with tyrosine kinase TEC (PubMed:15492005). Interacts with CSF1R (PubMed:15557176). Interacts (via N-terminus) with SH3YL1 (via SH3 domain) (PubMed:21624956). Interacts (via SH2 domain) with tyrosine phosphorylated KLRC1 (via ITIM) (PubMed:9485206). Interacts with NEDD9/HEF1 (By similarity).</text>
</comment>
<comment type="interaction">
    <interactant intactId="EBI-2642932">
        <id>Q6P549</id>
    </interactant>
    <interactant intactId="EBI-8052786">
        <id>Q9Z0R4-2</id>
        <label>Itsn1</label>
    </interactant>
    <organismsDiffer>false</organismsDiffer>
    <experiments>2</experiments>
</comment>
<comment type="subcellular location">
    <subcellularLocation>
        <location evidence="6">Cytoplasm</location>
        <location evidence="6">Cytosol</location>
    </subcellularLocation>
    <subcellularLocation>
        <location evidence="1">Cytoplasm</location>
        <location evidence="1">Cytoskeleton</location>
    </subcellularLocation>
    <subcellularLocation>
        <location evidence="6">Membrane</location>
        <topology>Peripheral membrane protein</topology>
    </subcellularLocation>
    <subcellularLocation>
        <location evidence="4">Cell projection</location>
        <location evidence="4">Filopodium</location>
    </subcellularLocation>
    <subcellularLocation>
        <location evidence="4">Cell projection</location>
        <location evidence="4">Lamellipodium</location>
    </subcellularLocation>
    <subcellularLocation>
        <location evidence="3">Basal cell membrane</location>
    </subcellularLocation>
    <subcellularLocation>
        <location evidence="2">Nucleus</location>
    </subcellularLocation>
    <subcellularLocation>
        <location evidence="2">Nucleus speckle</location>
    </subcellularLocation>
    <subcellularLocation>
        <location evidence="3">Cytoplasm</location>
        <location evidence="3">Cytoskeleton</location>
        <location evidence="3">Spindle pole</location>
    </subcellularLocation>
    <text>Translocates to membrane ruffles when activated, translocation is probably due to different mechanisms depending on the stimulus and cell type. Partly translocated via its SH2 domain which mediates interaction with tyrosine phosphorylated receptors such as the FC-gamma-RIIB receptor (FCGR2B). Tyrosine phosphorylation may also participate in membrane localization. Insulin specifically stimulates its redistribution from the cytosol to the plasma membrane. Recruited to the membrane following M-CSF stimulation. In activated spreading platelets, localizes with actin at filopodia, lamellipodia and the central actin ring.</text>
</comment>
<comment type="tissue specificity">
    <text evidence="10">Widely expressed.</text>
</comment>
<comment type="developmental stage">
    <text evidence="10">In 15.5 dpc embryos, it is strongly expressed in the liver, specific regions of the central nervous system, the thymus, the lung, and the cartilage perichondrium. In adult it is markedly present in the brain and the thymus and at different stages of spermatozoa maturation in the seminiferous tubules.</text>
</comment>
<comment type="induction">
    <text evidence="14">Overexpressed in diabetic db/db mice.</text>
</comment>
<comment type="domain">
    <text evidence="4">The SH2 domain interacts with tyrosine phosphorylated forms of proteins such as SHC1 or FCGR2A (By similarity). It also mediates the interaction with p130Cas/BCAR1 (By similarity).</text>
</comment>
<comment type="domain">
    <text evidence="5">The NPXY sequence motif found in many tyrosine-phosphorylated proteins is required for the specific binding of the PID domain.</text>
</comment>
<comment type="PTM">
    <text evidence="1">Tyrosine phosphorylated by the members of the SRC family after exposure to a diverse array of extracellular stimuli such as insulin, growth factors such as EGF or PDGF, chemokines, integrin ligands and hypertonic and oxidative stress. May be phosphorylated upon IgG receptor FCGR2B-binding. Phosphorylated at Tyr-987 following cell attachment and spreading. Phosphorylated at Tyr-1161 following EGF signaling pathway stimulation (By similarity).</text>
</comment>
<comment type="disruption phenotype">
    <text evidence="13 19">Mice are viable, have normal glucose and insulin levels, and normal insulin and glucose tolerance. They are however highly resistant to weight gain when placed on a high-fat diet, suggesting that inhibition of Inppl1 would be useful in the effort to ameliorate diet-induced obesity. According to preliminary results from PubMed:11343120, mice display increased sensitivity to insulin, characterized by severe neonatal hypoglycemia, deregulated expression of the genes involved in gluconeogenesis, and perinatal death. They display increased glucose tolerance and insulin sensitivity associated with an increased recruitment of the Slc2a4/Glut4 glucose transporter and increased glycogen synthesis in skeletal muscles. However, these knockout mice also contain a deletion of the last exon of Phox2a gene. It is therefore unknown whether the insulin sensitivity observed in these mice result from inactivation of either Inppl1 or Phox2a.</text>
</comment>
<comment type="similarity">
    <text evidence="26">Belongs to the inositol 1,4,5-trisphosphate 5-phosphatase family.</text>
</comment>
<comment type="sequence caution" evidence="26">
    <conflict type="erroneous initiation">
        <sequence resource="EMBL-CDS" id="AAI19454"/>
    </conflict>
</comment>
<organism>
    <name type="scientific">Mus musculus</name>
    <name type="common">Mouse</name>
    <dbReference type="NCBI Taxonomy" id="10090"/>
    <lineage>
        <taxon>Eukaryota</taxon>
        <taxon>Metazoa</taxon>
        <taxon>Chordata</taxon>
        <taxon>Craniata</taxon>
        <taxon>Vertebrata</taxon>
        <taxon>Euteleostomi</taxon>
        <taxon>Mammalia</taxon>
        <taxon>Eutheria</taxon>
        <taxon>Euarchontoglires</taxon>
        <taxon>Glires</taxon>
        <taxon>Rodentia</taxon>
        <taxon>Myomorpha</taxon>
        <taxon>Muroidea</taxon>
        <taxon>Muridae</taxon>
        <taxon>Murinae</taxon>
        <taxon>Mus</taxon>
        <taxon>Mus</taxon>
    </lineage>
</organism>
<accession>Q6P549</accession>
<accession>O08611</accession>
<accession>Q0VDX5</accession>
<accession>Q80YB9</accession>
<accession>Q9JLL7</accession>
<evidence type="ECO:0000250" key="1"/>
<evidence type="ECO:0000250" key="2">
    <source>
        <dbReference type="UniProtKB" id="D7PF45"/>
    </source>
</evidence>
<evidence type="ECO:0000250" key="3">
    <source>
        <dbReference type="UniProtKB" id="F1PNY0"/>
    </source>
</evidence>
<evidence type="ECO:0000250" key="4">
    <source>
        <dbReference type="UniProtKB" id="O15357"/>
    </source>
</evidence>
<evidence type="ECO:0000250" key="5">
    <source>
        <dbReference type="UniProtKB" id="Q9ES52"/>
    </source>
</evidence>
<evidence type="ECO:0000250" key="6">
    <source>
        <dbReference type="UniProtKB" id="Q9WVR3"/>
    </source>
</evidence>
<evidence type="ECO:0000255" key="7">
    <source>
        <dbReference type="PROSITE-ProRule" id="PRU00184"/>
    </source>
</evidence>
<evidence type="ECO:0000255" key="8">
    <source>
        <dbReference type="PROSITE-ProRule" id="PRU00191"/>
    </source>
</evidence>
<evidence type="ECO:0000256" key="9">
    <source>
        <dbReference type="SAM" id="MobiDB-lite"/>
    </source>
</evidence>
<evidence type="ECO:0000269" key="10">
    <source>
    </source>
</evidence>
<evidence type="ECO:0000269" key="11">
    <source>
    </source>
</evidence>
<evidence type="ECO:0000269" key="12">
    <source>
    </source>
</evidence>
<evidence type="ECO:0000269" key="13">
    <source>
    </source>
</evidence>
<evidence type="ECO:0000269" key="14">
    <source>
    </source>
</evidence>
<evidence type="ECO:0000269" key="15">
    <source>
    </source>
</evidence>
<evidence type="ECO:0000269" key="16">
    <source>
    </source>
</evidence>
<evidence type="ECO:0000269" key="17">
    <source>
    </source>
</evidence>
<evidence type="ECO:0000269" key="18">
    <source>
    </source>
</evidence>
<evidence type="ECO:0000269" key="19">
    <source>
    </source>
</evidence>
<evidence type="ECO:0000269" key="20">
    <source>
    </source>
</evidence>
<evidence type="ECO:0000269" key="21">
    <source>
    </source>
</evidence>
<evidence type="ECO:0000269" key="22">
    <source>
    </source>
</evidence>
<evidence type="ECO:0000269" key="23">
    <source>
    </source>
</evidence>
<evidence type="ECO:0000303" key="24">
    <source>
    </source>
</evidence>
<evidence type="ECO:0000303" key="25">
    <source>
    </source>
</evidence>
<evidence type="ECO:0000305" key="26"/>
<evidence type="ECO:0000305" key="27">
    <source>
    </source>
</evidence>
<evidence type="ECO:0000312" key="28">
    <source>
        <dbReference type="MGI" id="MGI:1333787"/>
    </source>
</evidence>
<evidence type="ECO:0007744" key="29">
    <source>
        <dbReference type="PDB" id="5ZRX"/>
    </source>
</evidence>
<evidence type="ECO:0007744" key="30">
    <source>
    </source>
</evidence>
<evidence type="ECO:0007829" key="31">
    <source>
        <dbReference type="PDB" id="5ZRX"/>
    </source>
</evidence>
<sequence length="1257" mass="138973">MASVCGTPSPGGALGSPAPAWYHRDLSRAAAEELLARAGRDGSFLVRDSESVAGAFALCVLYQKHVHTYRILPDGEDFLAVQTSQGVPVRRFQTLGELIGLYAQPNQGLVCALLLPVEGEREPDPPDDRDASDVEDEKPPLPPRSGSTSISAPVGPSSPLPTPETPTTPAAESTPNGLSTVSHEYLKGSYGLDLEAVRGGASNLPHLTRTLVTSCRRLHSEVDKVLSGLEILSKVFDQQSSPMVTRLLQQQSLPQTGEQELESLVLKLSVLKDFLSGIQKKALKALQDMSSTAPPAPLQPSIRKAKTIPVQAFEVKLDVTLGDLTKIGKSQKFTLSVDVEGGRLVLLRRQRDSQEDWTTFTHDRIRQLIKSQRVQNKLGVVFEKEKDRTQRKDFIFVSARKREAFCQLLQLMKNRHSKQDEPDMISVFIGTWNMGSVPPPKNVTSWFTSKGLGKALDEVTVTIPHDIYVFGTQENSVGDREWLDLLRGGLKELTDLDYRPIAMQSLWNIKVAVLVKPEHENRISHVSTSSVKTGIANTLGNKGAVGVSFMFNGTSFGFVNCHLTSGNEKTTRRNQNYLDILRLLSLGDRQLSAFDISLRFTHLFWFGDLNYRLDMDIQEILNYISRREFEPLLRVDQLNLEREKHKVFLRFSEEEISFPPTYRYERGSRDTYAWHKQKPTGVRTNVPSWCDRILWKSYPETHIICNSYGCTDDIVTSDHSPVFGTFEVGVTSQFISKKGLSKTSDQAYIEFESIEAIVKTASRTKFFIEFYSTCLEEYKKSFENDAQSSDNINFLKVQWSSRQLPTLKPILADIEYLQDQHLLLTVKSMDGYESYGECVVALKSMIGSTAQQFLTFLSHRGEETGNIRGSMKVRVPTERLGTRERLYEWISIDKDDTGAKSKVPSVSRGSQEHRSGSRKPASTETSCPLSKLFEEPEKPPPTGRPPAPPRAVPREEPLNPRLKSEGTSEQEGVAAPPPKNSFNNPAYYVLEGVPHQLLPLEPPSLARAPLPPATKNKVAITVPAPQLGRHRTPRVGEGSSSDEDSGGTLPPPDFPPPPLPDSAIFLPPNLDPLSMPVVRGRSGGEARGPPPPKAHPRPPLPPGTSPASTFLGEVASGDDRSCSVLQMAKTLSEVDYAPGPGRSALLPNPLELQPPRGPSDYGRPLSFPPPRIRESIQEDLAEEAPCPQGGRASGLGEAGMGAWLRAIGLERYEEGLVHNGWDDLEFLSDITEEDLEEAGVQDPAHKRLLLDTLQLSK</sequence>
<dbReference type="EC" id="3.1.3.86" evidence="12"/>
<dbReference type="EMBL" id="AF162781">
    <property type="protein sequence ID" value="AAF28187.1"/>
    <property type="molecule type" value="mRNA"/>
</dbReference>
<dbReference type="EMBL" id="BC049961">
    <property type="protein sequence ID" value="AAH49961.1"/>
    <property type="molecule type" value="mRNA"/>
</dbReference>
<dbReference type="EMBL" id="BC063080">
    <property type="protein sequence ID" value="AAH63080.1"/>
    <property type="molecule type" value="mRNA"/>
</dbReference>
<dbReference type="EMBL" id="BC119453">
    <property type="protein sequence ID" value="AAI19454.1"/>
    <property type="status" value="ALT_INIT"/>
    <property type="molecule type" value="mRNA"/>
</dbReference>
<dbReference type="EMBL" id="U92477">
    <property type="protein sequence ID" value="AAB82337.1"/>
    <property type="molecule type" value="mRNA"/>
</dbReference>
<dbReference type="CCDS" id="CCDS21515.1"/>
<dbReference type="RefSeq" id="NP_001116211.1">
    <property type="nucleotide sequence ID" value="NM_001122739.2"/>
</dbReference>
<dbReference type="RefSeq" id="NP_001399517.1">
    <property type="nucleotide sequence ID" value="NM_001412588.1"/>
</dbReference>
<dbReference type="RefSeq" id="NP_001399518.1">
    <property type="nucleotide sequence ID" value="NM_001412589.1"/>
</dbReference>
<dbReference type="RefSeq" id="NP_001399519.1">
    <property type="nucleotide sequence ID" value="NM_001412590.1"/>
</dbReference>
<dbReference type="RefSeq" id="NP_034697.2">
    <property type="nucleotide sequence ID" value="NM_010567.3"/>
</dbReference>
<dbReference type="RefSeq" id="XP_006507454.1">
    <property type="nucleotide sequence ID" value="XM_006507391.3"/>
</dbReference>
<dbReference type="RefSeq" id="XP_011239984.1">
    <property type="nucleotide sequence ID" value="XM_011241682.2"/>
</dbReference>
<dbReference type="RefSeq" id="XP_017177480.1">
    <property type="nucleotide sequence ID" value="XM_017321991.1"/>
</dbReference>
<dbReference type="PDB" id="5ZRX">
    <property type="method" value="X-ray"/>
    <property type="resolution" value="1.50 A"/>
    <property type="chains" value="A/B=1200-1257"/>
</dbReference>
<dbReference type="PDBsum" id="5ZRX"/>
<dbReference type="BMRB" id="Q6P549"/>
<dbReference type="SMR" id="Q6P549"/>
<dbReference type="BioGRID" id="200770">
    <property type="interactions" value="17"/>
</dbReference>
<dbReference type="FunCoup" id="Q6P549">
    <property type="interactions" value="1570"/>
</dbReference>
<dbReference type="IntAct" id="Q6P549">
    <property type="interactions" value="6"/>
</dbReference>
<dbReference type="MINT" id="Q6P549"/>
<dbReference type="STRING" id="10090.ENSMUSP00000048057"/>
<dbReference type="BindingDB" id="Q6P549"/>
<dbReference type="ChEMBL" id="CHEMBL2331063"/>
<dbReference type="GlyGen" id="Q6P549">
    <property type="glycosylation" value="1 site"/>
</dbReference>
<dbReference type="iPTMnet" id="Q6P549"/>
<dbReference type="PhosphoSitePlus" id="Q6P549"/>
<dbReference type="SwissPalm" id="Q6P549"/>
<dbReference type="PaxDb" id="10090-ENSMUSP00000048057"/>
<dbReference type="PeptideAtlas" id="Q6P549"/>
<dbReference type="ProteomicsDB" id="257225"/>
<dbReference type="Pumba" id="Q6P549"/>
<dbReference type="Antibodypedia" id="30825">
    <property type="antibodies" value="341 antibodies from 33 providers"/>
</dbReference>
<dbReference type="DNASU" id="16332"/>
<dbReference type="Ensembl" id="ENSMUST00000035836.14">
    <property type="protein sequence ID" value="ENSMUSP00000048057.7"/>
    <property type="gene ID" value="ENSMUSG00000032737.14"/>
</dbReference>
<dbReference type="Ensembl" id="ENSMUST00000165052.8">
    <property type="protein sequence ID" value="ENSMUSP00000132883.2"/>
    <property type="gene ID" value="ENSMUSG00000032737.14"/>
</dbReference>
<dbReference type="GeneID" id="16332"/>
<dbReference type="KEGG" id="mmu:16332"/>
<dbReference type="UCSC" id="uc009ipg.2">
    <property type="organism name" value="mouse"/>
</dbReference>
<dbReference type="AGR" id="MGI:1333787"/>
<dbReference type="CTD" id="3636"/>
<dbReference type="MGI" id="MGI:1333787">
    <property type="gene designation" value="Inppl1"/>
</dbReference>
<dbReference type="VEuPathDB" id="HostDB:ENSMUSG00000032737"/>
<dbReference type="eggNOG" id="KOG0565">
    <property type="taxonomic scope" value="Eukaryota"/>
</dbReference>
<dbReference type="eggNOG" id="KOG4384">
    <property type="taxonomic scope" value="Eukaryota"/>
</dbReference>
<dbReference type="GeneTree" id="ENSGT00940000156576"/>
<dbReference type="InParanoid" id="Q6P549"/>
<dbReference type="OMA" id="TERMGTR"/>
<dbReference type="OrthoDB" id="7862313at2759"/>
<dbReference type="PhylomeDB" id="Q6P549"/>
<dbReference type="TreeFam" id="TF323475"/>
<dbReference type="BRENDA" id="3.1.3.36">
    <property type="organism ID" value="3474"/>
</dbReference>
<dbReference type="Reactome" id="R-MMU-1660499">
    <property type="pathway name" value="Synthesis of PIPs at the plasma membrane"/>
</dbReference>
<dbReference type="Reactome" id="R-MMU-1855204">
    <property type="pathway name" value="Synthesis of IP3 and IP4 in the cytosol"/>
</dbReference>
<dbReference type="Reactome" id="R-MMU-912526">
    <property type="pathway name" value="Interleukin receptor SHC signaling"/>
</dbReference>
<dbReference type="BioGRID-ORCS" id="16332">
    <property type="hits" value="4 hits in 84 CRISPR screens"/>
</dbReference>
<dbReference type="ChiTaRS" id="Inppl1">
    <property type="organism name" value="mouse"/>
</dbReference>
<dbReference type="PRO" id="PR:Q6P549"/>
<dbReference type="Proteomes" id="UP000000589">
    <property type="component" value="Chromosome 7"/>
</dbReference>
<dbReference type="RNAct" id="Q6P549">
    <property type="molecule type" value="protein"/>
</dbReference>
<dbReference type="Bgee" id="ENSMUSG00000032737">
    <property type="expression patterns" value="Expressed in hindlimb stylopod muscle and 264 other cell types or tissues"/>
</dbReference>
<dbReference type="ExpressionAtlas" id="Q6P549">
    <property type="expression patterns" value="baseline and differential"/>
</dbReference>
<dbReference type="GO" id="GO:0009925">
    <property type="term" value="C:basal plasma membrane"/>
    <property type="evidence" value="ECO:0000250"/>
    <property type="project" value="UniProtKB"/>
</dbReference>
<dbReference type="GO" id="GO:0005737">
    <property type="term" value="C:cytoplasm"/>
    <property type="evidence" value="ECO:0000314"/>
    <property type="project" value="MGI"/>
</dbReference>
<dbReference type="GO" id="GO:0005829">
    <property type="term" value="C:cytosol"/>
    <property type="evidence" value="ECO:0000304"/>
    <property type="project" value="Reactome"/>
</dbReference>
<dbReference type="GO" id="GO:0030175">
    <property type="term" value="C:filopodium"/>
    <property type="evidence" value="ECO:0007669"/>
    <property type="project" value="UniProtKB-SubCell"/>
</dbReference>
<dbReference type="GO" id="GO:0005794">
    <property type="term" value="C:Golgi apparatus"/>
    <property type="evidence" value="ECO:0007669"/>
    <property type="project" value="Ensembl"/>
</dbReference>
<dbReference type="GO" id="GO:0030027">
    <property type="term" value="C:lamellipodium"/>
    <property type="evidence" value="ECO:0007669"/>
    <property type="project" value="UniProtKB-SubCell"/>
</dbReference>
<dbReference type="GO" id="GO:0016607">
    <property type="term" value="C:nuclear speck"/>
    <property type="evidence" value="ECO:0000250"/>
    <property type="project" value="UniProtKB"/>
</dbReference>
<dbReference type="GO" id="GO:0005634">
    <property type="term" value="C:nucleus"/>
    <property type="evidence" value="ECO:0000250"/>
    <property type="project" value="UniProtKB"/>
</dbReference>
<dbReference type="GO" id="GO:0005886">
    <property type="term" value="C:plasma membrane"/>
    <property type="evidence" value="ECO:0000314"/>
    <property type="project" value="MGI"/>
</dbReference>
<dbReference type="GO" id="GO:0000922">
    <property type="term" value="C:spindle pole"/>
    <property type="evidence" value="ECO:0000250"/>
    <property type="project" value="UniProtKB"/>
</dbReference>
<dbReference type="GO" id="GO:0003779">
    <property type="term" value="F:actin binding"/>
    <property type="evidence" value="ECO:0007669"/>
    <property type="project" value="UniProtKB-KW"/>
</dbReference>
<dbReference type="GO" id="GO:0034485">
    <property type="term" value="F:phosphatidylinositol-3,4,5-trisphosphate 5-phosphatase activity"/>
    <property type="evidence" value="ECO:0007669"/>
    <property type="project" value="UniProtKB-EC"/>
</dbReference>
<dbReference type="GO" id="GO:0042169">
    <property type="term" value="F:SH2 domain binding"/>
    <property type="evidence" value="ECO:0007669"/>
    <property type="project" value="Ensembl"/>
</dbReference>
<dbReference type="GO" id="GO:0017124">
    <property type="term" value="F:SH3 domain binding"/>
    <property type="evidence" value="ECO:0007669"/>
    <property type="project" value="UniProtKB-KW"/>
</dbReference>
<dbReference type="GO" id="GO:0007015">
    <property type="term" value="P:actin filament organization"/>
    <property type="evidence" value="ECO:0007669"/>
    <property type="project" value="Ensembl"/>
</dbReference>
<dbReference type="GO" id="GO:0006915">
    <property type="term" value="P:apoptotic process"/>
    <property type="evidence" value="ECO:0000314"/>
    <property type="project" value="MGI"/>
</dbReference>
<dbReference type="GO" id="GO:0007155">
    <property type="term" value="P:cell adhesion"/>
    <property type="evidence" value="ECO:0007669"/>
    <property type="project" value="UniProtKB-KW"/>
</dbReference>
<dbReference type="GO" id="GO:0001958">
    <property type="term" value="P:endochondral ossification"/>
    <property type="evidence" value="ECO:0000250"/>
    <property type="project" value="UniProtKB"/>
</dbReference>
<dbReference type="GO" id="GO:0006897">
    <property type="term" value="P:endocytosis"/>
    <property type="evidence" value="ECO:0007669"/>
    <property type="project" value="Ensembl"/>
</dbReference>
<dbReference type="GO" id="GO:0070371">
    <property type="term" value="P:ERK1 and ERK2 cascade"/>
    <property type="evidence" value="ECO:0000316"/>
    <property type="project" value="MGI"/>
</dbReference>
<dbReference type="GO" id="GO:0000132">
    <property type="term" value="P:establishment of mitotic spindle orientation"/>
    <property type="evidence" value="ECO:0000250"/>
    <property type="project" value="UniProtKB"/>
</dbReference>
<dbReference type="GO" id="GO:0010467">
    <property type="term" value="P:gene expression"/>
    <property type="evidence" value="ECO:0000316"/>
    <property type="project" value="MGI"/>
</dbReference>
<dbReference type="GO" id="GO:0006006">
    <property type="term" value="P:glucose metabolic process"/>
    <property type="evidence" value="ECO:0000315"/>
    <property type="project" value="MGI"/>
</dbReference>
<dbReference type="GO" id="GO:0002376">
    <property type="term" value="P:immune system process"/>
    <property type="evidence" value="ECO:0007669"/>
    <property type="project" value="UniProtKB-KW"/>
</dbReference>
<dbReference type="GO" id="GO:0006629">
    <property type="term" value="P:lipid metabolic process"/>
    <property type="evidence" value="ECO:0000315"/>
    <property type="project" value="MGI"/>
</dbReference>
<dbReference type="GO" id="GO:0008285">
    <property type="term" value="P:negative regulation of cell population proliferation"/>
    <property type="evidence" value="ECO:0000314"/>
    <property type="project" value="MGI"/>
</dbReference>
<dbReference type="GO" id="GO:0010629">
    <property type="term" value="P:negative regulation of gene expression"/>
    <property type="evidence" value="ECO:0000315"/>
    <property type="project" value="MGI"/>
</dbReference>
<dbReference type="GO" id="GO:0043491">
    <property type="term" value="P:phosphatidylinositol 3-kinase/protein kinase B signal transduction"/>
    <property type="evidence" value="ECO:0000316"/>
    <property type="project" value="MGI"/>
</dbReference>
<dbReference type="GO" id="GO:0006661">
    <property type="term" value="P:phosphatidylinositol biosynthetic process"/>
    <property type="evidence" value="ECO:0000315"/>
    <property type="project" value="MGI"/>
</dbReference>
<dbReference type="GO" id="GO:0046856">
    <property type="term" value="P:phosphatidylinositol dephosphorylation"/>
    <property type="evidence" value="ECO:0007669"/>
    <property type="project" value="InterPro"/>
</dbReference>
<dbReference type="GO" id="GO:0009791">
    <property type="term" value="P:post-embryonic development"/>
    <property type="evidence" value="ECO:0000315"/>
    <property type="project" value="MGI"/>
</dbReference>
<dbReference type="GO" id="GO:0110053">
    <property type="term" value="P:regulation of actin filament organization"/>
    <property type="evidence" value="ECO:0000250"/>
    <property type="project" value="UniProtKB"/>
</dbReference>
<dbReference type="GO" id="GO:0032880">
    <property type="term" value="P:regulation of protein localization"/>
    <property type="evidence" value="ECO:0000250"/>
    <property type="project" value="UniProtKB"/>
</dbReference>
<dbReference type="GO" id="GO:0032868">
    <property type="term" value="P:response to insulin"/>
    <property type="evidence" value="ECO:0000315"/>
    <property type="project" value="MGI"/>
</dbReference>
<dbReference type="GO" id="GO:0097178">
    <property type="term" value="P:ruffle assembly"/>
    <property type="evidence" value="ECO:0000315"/>
    <property type="project" value="MGI"/>
</dbReference>
<dbReference type="CDD" id="cd09101">
    <property type="entry name" value="INPP5c_SHIP2-INPPL1"/>
    <property type="match status" value="1"/>
</dbReference>
<dbReference type="CDD" id="cd09491">
    <property type="entry name" value="SAM_Ship2"/>
    <property type="match status" value="1"/>
</dbReference>
<dbReference type="CDD" id="cd10343">
    <property type="entry name" value="SH2_SHIP"/>
    <property type="match status" value="1"/>
</dbReference>
<dbReference type="FunFam" id="3.30.505.10:FF:000035">
    <property type="entry name" value="phosphatidylinositol 3,4,5-trisphosphate 5-phosphatase 1"/>
    <property type="match status" value="1"/>
</dbReference>
<dbReference type="FunFam" id="3.60.10.10:FF:000005">
    <property type="entry name" value="phosphatidylinositol 3,4,5-trisphosphate 5-phosphatase 1"/>
    <property type="match status" value="1"/>
</dbReference>
<dbReference type="FunFam" id="1.10.150.50:FF:000049">
    <property type="entry name" value="phosphatidylinositol 3,4,5-trisphosphate 5-phosphatase 2"/>
    <property type="match status" value="1"/>
</dbReference>
<dbReference type="Gene3D" id="3.60.10.10">
    <property type="entry name" value="Endonuclease/exonuclease/phosphatase"/>
    <property type="match status" value="1"/>
</dbReference>
<dbReference type="Gene3D" id="3.30.505.10">
    <property type="entry name" value="SH2 domain"/>
    <property type="match status" value="1"/>
</dbReference>
<dbReference type="Gene3D" id="1.10.150.50">
    <property type="entry name" value="Transcription Factor, Ets-1"/>
    <property type="match status" value="1"/>
</dbReference>
<dbReference type="InterPro" id="IPR036691">
    <property type="entry name" value="Endo/exonu/phosph_ase_sf"/>
</dbReference>
<dbReference type="InterPro" id="IPR000300">
    <property type="entry name" value="IPPc"/>
</dbReference>
<dbReference type="InterPro" id="IPR001660">
    <property type="entry name" value="SAM"/>
</dbReference>
<dbReference type="InterPro" id="IPR013761">
    <property type="entry name" value="SAM/pointed_sf"/>
</dbReference>
<dbReference type="InterPro" id="IPR000980">
    <property type="entry name" value="SH2"/>
</dbReference>
<dbReference type="InterPro" id="IPR036860">
    <property type="entry name" value="SH2_dom_sf"/>
</dbReference>
<dbReference type="PANTHER" id="PTHR46051:SF2">
    <property type="entry name" value="PHOSPHATIDYLINOSITOL 3,4,5-TRISPHOSPHATE 5-PHOSPHATASE 2"/>
    <property type="match status" value="1"/>
</dbReference>
<dbReference type="PANTHER" id="PTHR46051">
    <property type="entry name" value="SH2 DOMAIN-CONTAINING PROTEIN"/>
    <property type="match status" value="1"/>
</dbReference>
<dbReference type="Pfam" id="PF24147">
    <property type="entry name" value="C2_SHIP1-2_2nd"/>
    <property type="match status" value="1"/>
</dbReference>
<dbReference type="Pfam" id="PF24150">
    <property type="entry name" value="C2_SHIP1-2_first"/>
    <property type="match status" value="1"/>
</dbReference>
<dbReference type="Pfam" id="PF22669">
    <property type="entry name" value="Exo_endo_phos2"/>
    <property type="match status" value="1"/>
</dbReference>
<dbReference type="Pfam" id="PF00536">
    <property type="entry name" value="SAM_1"/>
    <property type="match status" value="1"/>
</dbReference>
<dbReference type="Pfam" id="PF00017">
    <property type="entry name" value="SH2"/>
    <property type="match status" value="1"/>
</dbReference>
<dbReference type="PRINTS" id="PR00401">
    <property type="entry name" value="SH2DOMAIN"/>
</dbReference>
<dbReference type="SMART" id="SM00128">
    <property type="entry name" value="IPPc"/>
    <property type="match status" value="1"/>
</dbReference>
<dbReference type="SMART" id="SM00454">
    <property type="entry name" value="SAM"/>
    <property type="match status" value="1"/>
</dbReference>
<dbReference type="SMART" id="SM00252">
    <property type="entry name" value="SH2"/>
    <property type="match status" value="1"/>
</dbReference>
<dbReference type="SUPFAM" id="SSF56219">
    <property type="entry name" value="DNase I-like"/>
    <property type="match status" value="1"/>
</dbReference>
<dbReference type="SUPFAM" id="SSF47769">
    <property type="entry name" value="SAM/Pointed domain"/>
    <property type="match status" value="1"/>
</dbReference>
<dbReference type="SUPFAM" id="SSF55550">
    <property type="entry name" value="SH2 domain"/>
    <property type="match status" value="1"/>
</dbReference>
<dbReference type="PROSITE" id="PS50105">
    <property type="entry name" value="SAM_DOMAIN"/>
    <property type="match status" value="1"/>
</dbReference>
<dbReference type="PROSITE" id="PS50001">
    <property type="entry name" value="SH2"/>
    <property type="match status" value="1"/>
</dbReference>
<keyword id="KW-0002">3D-structure</keyword>
<keyword id="KW-0009">Actin-binding</keyword>
<keyword id="KW-0130">Cell adhesion</keyword>
<keyword id="KW-1003">Cell membrane</keyword>
<keyword id="KW-0966">Cell projection</keyword>
<keyword id="KW-0963">Cytoplasm</keyword>
<keyword id="KW-0206">Cytoskeleton</keyword>
<keyword id="KW-0378">Hydrolase</keyword>
<keyword id="KW-0391">Immunity</keyword>
<keyword id="KW-0443">Lipid metabolism</keyword>
<keyword id="KW-0472">Membrane</keyword>
<keyword id="KW-0539">Nucleus</keyword>
<keyword id="KW-0597">Phosphoprotein</keyword>
<keyword id="KW-1185">Reference proteome</keyword>
<keyword id="KW-0727">SH2 domain</keyword>
<keyword id="KW-0729">SH3-binding</keyword>
<feature type="chain" id="PRO_0000302871" description="Phosphatidylinositol 3,4,5-trisphosphate 5-phosphatase 2">
    <location>
        <begin position="1"/>
        <end position="1257"/>
    </location>
</feature>
<feature type="domain" description="SH2" evidence="8">
    <location>
        <begin position="21"/>
        <end position="117"/>
    </location>
</feature>
<feature type="domain" description="SAM" evidence="7">
    <location>
        <begin position="1195"/>
        <end position="1257"/>
    </location>
</feature>
<feature type="region of interest" description="Disordered" evidence="9">
    <location>
        <begin position="119"/>
        <end position="181"/>
    </location>
</feature>
<feature type="region of interest" description="Disordered" evidence="9">
    <location>
        <begin position="897"/>
        <end position="986"/>
    </location>
</feature>
<feature type="region of interest" description="Disordered" evidence="9">
    <location>
        <begin position="999"/>
        <end position="1119"/>
    </location>
</feature>
<feature type="region of interest" description="Disordered" evidence="9">
    <location>
        <begin position="1134"/>
        <end position="1196"/>
    </location>
</feature>
<feature type="short sequence motif" description="SH3-binding">
    <location>
        <begin position="945"/>
        <end position="950"/>
    </location>
</feature>
<feature type="short sequence motif" description="NPXY motif">
    <location>
        <begin position="984"/>
        <end position="987"/>
    </location>
</feature>
<feature type="compositionally biased region" description="Basic and acidic residues" evidence="9">
    <location>
        <begin position="119"/>
        <end position="132"/>
    </location>
</feature>
<feature type="compositionally biased region" description="Pro residues" evidence="9">
    <location>
        <begin position="156"/>
        <end position="166"/>
    </location>
</feature>
<feature type="compositionally biased region" description="Pro residues" evidence="9">
    <location>
        <begin position="939"/>
        <end position="951"/>
    </location>
</feature>
<feature type="compositionally biased region" description="Basic and acidic residues" evidence="9">
    <location>
        <begin position="952"/>
        <end position="966"/>
    </location>
</feature>
<feature type="compositionally biased region" description="Low complexity" evidence="9">
    <location>
        <begin position="999"/>
        <end position="1008"/>
    </location>
</feature>
<feature type="compositionally biased region" description="Pro residues" evidence="9">
    <location>
        <begin position="1049"/>
        <end position="1060"/>
    </location>
</feature>
<feature type="compositionally biased region" description="Pro residues" evidence="9">
    <location>
        <begin position="1088"/>
        <end position="1104"/>
    </location>
</feature>
<feature type="modified residue" description="Phosphoserine" evidence="30">
    <location>
        <position position="132"/>
    </location>
</feature>
<feature type="modified residue" description="Phosphothreonine" evidence="4">
    <location>
        <position position="165"/>
    </location>
</feature>
<feature type="modified residue" description="Phosphoserine" evidence="4">
    <location>
        <position position="241"/>
    </location>
</feature>
<feature type="modified residue" description="Phosphoserine" evidence="4">
    <location>
        <position position="353"/>
    </location>
</feature>
<feature type="modified residue" description="Phosphotyrosine" evidence="4">
    <location>
        <position position="887"/>
    </location>
</feature>
<feature type="modified residue" description="Phosphoserine" evidence="4">
    <location>
        <position position="891"/>
    </location>
</feature>
<feature type="modified residue" description="Phosphotyrosine" evidence="4">
    <location>
        <position position="987"/>
    </location>
</feature>
<feature type="modified residue" description="Phosphoserine" evidence="4">
    <location>
        <position position="1132"/>
    </location>
</feature>
<feature type="modified residue" description="Phosphotyrosine" evidence="4">
    <location>
        <position position="1136"/>
    </location>
</feature>
<feature type="modified residue" description="Phosphotyrosine" evidence="4">
    <location>
        <position position="1161"/>
    </location>
</feature>
<feature type="modified residue" description="Phosphoserine" evidence="4">
    <location>
        <position position="1256"/>
    </location>
</feature>
<feature type="mutagenesis site" description="Does not affect the ability to inhibit PKB activity." evidence="12">
    <original>R</original>
    <variation>A</variation>
    <location>
        <position position="47"/>
    </location>
</feature>
<feature type="mutagenesis site" description="Abolishes both enzyme activity and ability to inhibit PKB activity." evidence="12">
    <original>D</original>
    <variation>A</variation>
    <location>
        <position position="608"/>
    </location>
</feature>
<feature type="mutagenesis site" description="Induces little effect." evidence="12">
    <original>C</original>
    <variation>A</variation>
    <location>
        <position position="690"/>
    </location>
</feature>
<feature type="mutagenesis site" description="Still partially active." evidence="12">
    <original>R</original>
    <variation>A</variation>
    <location>
        <position position="692"/>
    </location>
</feature>
<feature type="mutagenesis site" description="Does not affect the ability to inhibit PKB activity." evidence="12">
    <original>Y</original>
    <variation>F</variation>
    <location>
        <position position="987"/>
    </location>
</feature>
<feature type="mutagenesis site" description="Abolishes interaction with EPHA2 SAM domain." evidence="22">
    <original>D</original>
    <variation>A</variation>
    <location>
        <position position="1222"/>
    </location>
</feature>
<feature type="mutagenesis site" description="Abolishes interaction with EPHA2 SAM domain." evidence="22">
    <original>F</original>
    <variation>A</variation>
    <variation>L</variation>
    <location>
        <position position="1226"/>
    </location>
</feature>
<feature type="sequence conflict" description="In Ref. 1; AAF28187." evidence="26" ref="1">
    <original>M</original>
    <variation>I</variation>
    <location>
        <position position="412"/>
    </location>
</feature>
<feature type="sequence conflict" description="In Ref. 1; AAF28187." evidence="26" ref="1">
    <original>L</original>
    <variation>I</variation>
    <location>
        <position position="506"/>
    </location>
</feature>
<feature type="sequence conflict" description="In Ref. 3; AAB82337." evidence="26" ref="3">
    <original>C</original>
    <variation>S</variation>
    <location>
        <position position="705"/>
    </location>
</feature>
<feature type="sequence conflict" description="In Ref. 1; AAF28187." evidence="26" ref="1">
    <original>G</original>
    <variation>V</variation>
    <location>
        <position position="972"/>
    </location>
</feature>
<feature type="helix" evidence="31">
    <location>
        <begin position="1200"/>
        <end position="1206"/>
    </location>
</feature>
<feature type="helix" evidence="31">
    <location>
        <begin position="1210"/>
        <end position="1212"/>
    </location>
</feature>
<feature type="helix" evidence="31">
    <location>
        <begin position="1213"/>
        <end position="1218"/>
    </location>
</feature>
<feature type="helix" evidence="31">
    <location>
        <begin position="1224"/>
        <end position="1227"/>
    </location>
</feature>
<feature type="helix" evidence="31">
    <location>
        <begin position="1232"/>
        <end position="1237"/>
    </location>
</feature>
<feature type="helix" evidence="31">
    <location>
        <begin position="1243"/>
        <end position="1255"/>
    </location>
</feature>
<reference key="1">
    <citation type="journal article" date="1999" name="Genomics">
        <title>The mouse SHIP2 (Inppl1) gene: complementary DNA, genomic structure, promoter analysis, and gene expression in the embryo and adult mouse.</title>
        <authorList>
            <person name="Schurmans S."/>
            <person name="Carrio R."/>
            <person name="Behrends J."/>
            <person name="Pouillon V."/>
            <person name="Merino J."/>
            <person name="Clement S."/>
        </authorList>
    </citation>
    <scope>NUCLEOTIDE SEQUENCE [MRNA]</scope>
    <scope>TISSUE SPECIFICITY</scope>
    <scope>DEVELOPMENTAL STAGE</scope>
</reference>
<reference key="2">
    <citation type="journal article" date="2004" name="Genome Res.">
        <title>The status, quality, and expansion of the NIH full-length cDNA project: the Mammalian Gene Collection (MGC).</title>
        <authorList>
            <consortium name="The MGC Project Team"/>
        </authorList>
    </citation>
    <scope>NUCLEOTIDE SEQUENCE [LARGE SCALE MRNA]</scope>
    <source>
        <strain>C57BL/6J</strain>
        <strain>FVB/N</strain>
        <tissue>Brain</tissue>
        <tissue>Kidney</tissue>
    </source>
</reference>
<reference key="3">
    <citation type="journal article" date="1997" name="Anal. Biochem.">
        <title>Examining the specificity of Src homology 3 domain -- ligand interactions with alkaline phosphatase fusion proteins.</title>
        <authorList>
            <person name="Yamabhai M."/>
            <person name="Kay B.K."/>
        </authorList>
    </citation>
    <scope>NUCLEOTIDE SEQUENCE [MRNA] OF 705-1183</scope>
</reference>
<reference key="4">
    <citation type="journal article" date="1998" name="Eur. J. Immunol.">
        <title>Inhibition of antigen-induced T cell response and antibody-induced NK cell cytotoxicity by NKG2A: association of NKG2A with SHP-1 and SHP-2 protein-tyrosine phosphatases.</title>
        <authorList>
            <person name="Le Drean E."/>
            <person name="Vely F."/>
            <person name="Olcese L."/>
            <person name="Cambiaggi A."/>
            <person name="Guia S."/>
            <person name="Krystal G."/>
            <person name="Gervois N."/>
            <person name="Moretta A."/>
            <person name="Jotereau F."/>
            <person name="Vivier E."/>
        </authorList>
    </citation>
    <scope>INTERACTION WITH KLRC1</scope>
</reference>
<reference key="5">
    <citation type="journal article" date="2000" name="Immunol. Lett.">
        <title>The SH2 domain containing inositol 5-phosphatase SHIP2 associates to the immunoreceptor tyrosine-based inhibition motif of Fc gammaRIIB in B cells under negative signaling.</title>
        <authorList>
            <person name="Muraille E."/>
            <person name="Bruhns P."/>
            <person name="Pesesse X."/>
            <person name="Daeeron M."/>
            <person name="Erneux C."/>
        </authorList>
    </citation>
    <scope>FUNCTION</scope>
    <scope>INTERACTION WITH FCGR2B</scope>
    <scope>PHOSPHORYLATION</scope>
</reference>
<reference key="6">
    <citation type="journal article" date="2000" name="Mol. Cell. Biol.">
        <title>5' phospholipid phosphatase SHIP-2 causes protein kinase B inactivation and cell cycle arrest in glioblastoma cells.</title>
        <authorList>
            <person name="Taylor V."/>
            <person name="Wong M."/>
            <person name="Brandts C."/>
            <person name="Reilly L."/>
            <person name="Dean N.M."/>
            <person name="Cowsert L.M."/>
            <person name="Moodie S."/>
            <person name="Stokoe D."/>
        </authorList>
    </citation>
    <scope>FUNCTION</scope>
    <scope>MUTAGENESIS OF ARG-47; ASP-608; CYS-690; ARG-692 AND TYR-987</scope>
    <scope>CATALYTIC ACTIVITY</scope>
</reference>
<reference key="7">
    <citation type="journal article" date="2001" name="Nature">
        <title>The lipid phosphatase SHIP2 controls insulin sensitivity.</title>
        <authorList>
            <person name="Clement S."/>
            <person name="Krause U."/>
            <person name="Desmedt F."/>
            <person name="Tanti J.-F."/>
            <person name="Behrends J."/>
            <person name="Pesesse X."/>
            <person name="Sasaki T."/>
            <person name="Penninger J."/>
            <person name="Doherty M."/>
            <person name="Malaisse W."/>
            <person name="Dumont J.E."/>
            <person name="Le Marchand-Brustel Y."/>
            <person name="Erneux C."/>
            <person name="Hue L."/>
            <person name="Schurmans S."/>
        </authorList>
    </citation>
    <scope>FUNCTION</scope>
    <scope>DISRUPTION PHENOTYPE</scope>
</reference>
<reference key="8">
    <citation type="journal article" date="2004" name="Nature">
        <authorList>
            <person name="Clement S."/>
            <person name="Krause U."/>
            <person name="Desmedt F."/>
            <person name="Tanti J.-F."/>
            <person name="Behrends J."/>
            <person name="Pesesse X."/>
            <person name="Sasaki T."/>
            <person name="Penninger J."/>
            <person name="Doherty M."/>
            <person name="Malaisse W."/>
            <person name="Dumont J.E."/>
            <person name="Le Marchand-Brustel Y."/>
            <person name="Erneux C."/>
            <person name="Hue L."/>
            <person name="Schurmans S."/>
        </authorList>
    </citation>
    <scope>ERRATUM OF PUBMED:11343120</scope>
</reference>
<reference key="9">
    <citation type="journal article" date="2002" name="Diabetes">
        <title>Association of SH2-containing inositol phosphatase 2 with the insulin resistance of diabetic db/db mice.</title>
        <authorList>
            <person name="Hori H."/>
            <person name="Sasaoka T."/>
            <person name="Ishihara H."/>
            <person name="Wada T."/>
            <person name="Murakami S."/>
            <person name="Ishiki M."/>
            <person name="Kobayashi M."/>
        </authorList>
    </citation>
    <scope>INDUCTION</scope>
</reference>
<reference key="10">
    <citation type="journal article" date="2004" name="J. Biol. Chem.">
        <title>SH2-containing inositol phosphatase 2 predominantly regulates Akt2, and not Akt1, phosphorylation at the plasma membrane in response to insulin in 3T3-L1 adipocytes.</title>
        <authorList>
            <person name="Sasaoka T."/>
            <person name="Wada T."/>
            <person name="Fukui K."/>
            <person name="Murakami S."/>
            <person name="Ishihara H."/>
            <person name="Suzuki R."/>
            <person name="Tobe K."/>
            <person name="Kadowaki T."/>
            <person name="Kobayashi M."/>
        </authorList>
    </citation>
    <scope>FUNCTION</scope>
    <scope>SUBCELLULAR LOCATION</scope>
</reference>
<reference key="11">
    <citation type="journal article" date="2004" name="J. Biol. Chem.">
        <title>Two distinct tyrosine-based motifs enable the inhibitory receptor FcgammaRIIB to cooperatively recruit the inositol phosphatases SHIP1/2 and the adapters Grb2/Grap.</title>
        <authorList>
            <person name="Isnardi I."/>
            <person name="Lesourne R."/>
            <person name="Bruhns P."/>
            <person name="Fridman W.H."/>
            <person name="Cambier J.C."/>
            <person name="Daeeron M."/>
        </authorList>
    </citation>
    <scope>FUNCTION</scope>
    <scope>INTERACTION WITH FCGR2B</scope>
</reference>
<reference key="12">
    <citation type="journal article" date="2004" name="J. Biol. Chem.">
        <title>SHIP family inositol phosphatases interact with and negatively regulate the Tec tyrosine kinase.</title>
        <authorList>
            <person name="Tomlinson M.G."/>
            <person name="Heath V.L."/>
            <person name="Turck C.W."/>
            <person name="Watson S.P."/>
            <person name="Weiss A."/>
        </authorList>
    </citation>
    <scope>INTERACTION WITH TEC</scope>
</reference>
<reference key="13">
    <citation type="journal article" date="2004" name="J. Immunol.">
        <title>SHIP2 is recruited to the cell membrane upon macrophage colony-stimulating factor (M-CSF) stimulation and regulates M-CSF-induced signaling.</title>
        <authorList>
            <person name="Wang Y."/>
            <person name="Keogh R.J."/>
            <person name="Hunter M.G."/>
            <person name="Mitchell C.A."/>
            <person name="Frey R.S."/>
            <person name="Javaid K."/>
            <person name="Malik A.B."/>
            <person name="Schurmans S."/>
            <person name="Tridandapani S."/>
            <person name="Marsh C.B."/>
        </authorList>
    </citation>
    <scope>FUNCTION</scope>
    <scope>SUBCELLULAR LOCATION</scope>
    <scope>PHOSPHORYLATION</scope>
    <scope>INTERACTION WITH CSF1R</scope>
</reference>
<reference key="14">
    <citation type="journal article" date="2005" name="Nat. Med.">
        <title>Absence of the lipid phosphatase SHIP2 confers resistance to dietary obesity.</title>
        <authorList>
            <person name="Sleeman M.W."/>
            <person name="Wortley K.E."/>
            <person name="Lai K.-M.V."/>
            <person name="Gowen L.C."/>
            <person name="Kintner J."/>
            <person name="Kline W.O."/>
            <person name="Garcia K."/>
            <person name="Stitt T.N."/>
            <person name="Yancopoulos G.D."/>
            <person name="Wiegand S.J."/>
            <person name="Glass D.J."/>
        </authorList>
    </citation>
    <scope>FUNCTION</scope>
    <scope>DISRUPTION PHENOTYPE</scope>
</reference>
<reference key="15">
    <citation type="journal article" date="2006" name="Blood">
        <title>The inositol phosphatase SHIP-2 down-regulates FcgammaR-mediated phagocytosis in murine macrophages independently of SHIP-1.</title>
        <authorList>
            <person name="Ai J."/>
            <person name="Maturu A."/>
            <person name="Johnson W."/>
            <person name="Wang Y."/>
            <person name="Marsh C.B."/>
            <person name="Tridandapani S."/>
        </authorList>
    </citation>
    <scope>FUNCTION</scope>
</reference>
<reference key="16">
    <citation type="journal article" date="2007" name="Proc. Natl. Acad. Sci. U.S.A.">
        <title>Large-scale phosphorylation analysis of mouse liver.</title>
        <authorList>
            <person name="Villen J."/>
            <person name="Beausoleil S.A."/>
            <person name="Gerber S.A."/>
            <person name="Gygi S.P."/>
        </authorList>
    </citation>
    <scope>PHOSPHORYLATION [LARGE SCALE ANALYSIS] AT SER-132</scope>
    <scope>IDENTIFICATION BY MASS SPECTROMETRY [LARGE SCALE ANALYSIS]</scope>
    <source>
        <tissue>Liver</tissue>
    </source>
</reference>
<reference key="17">
    <citation type="journal article" date="2010" name="Cell">
        <title>A tissue-specific atlas of mouse protein phosphorylation and expression.</title>
        <authorList>
            <person name="Huttlin E.L."/>
            <person name="Jedrychowski M.P."/>
            <person name="Elias J.E."/>
            <person name="Goswami T."/>
            <person name="Rad R."/>
            <person name="Beausoleil S.A."/>
            <person name="Villen J."/>
            <person name="Haas W."/>
            <person name="Sowa M.E."/>
            <person name="Gygi S.P."/>
        </authorList>
    </citation>
    <scope>IDENTIFICATION BY MASS SPECTROMETRY [LARGE SCALE ANALYSIS]</scope>
    <source>
        <tissue>Brain</tissue>
        <tissue>Brown adipose tissue</tissue>
        <tissue>Heart</tissue>
        <tissue>Kidney</tissue>
        <tissue>Liver</tissue>
        <tissue>Lung</tissue>
        <tissue>Pancreas</tissue>
        <tissue>Spleen</tissue>
        <tissue>Testis</tissue>
    </source>
</reference>
<reference key="18">
    <citation type="journal article" date="2011" name="J. Cell Biol.">
        <title>SH3YL1 regulates dorsal ruffle formation by a novel phosphoinositide-binding domain.</title>
        <authorList>
            <person name="Hasegawa J."/>
            <person name="Tokuda E."/>
            <person name="Tenno T."/>
            <person name="Tsujita K."/>
            <person name="Sawai H."/>
            <person name="Hiroaki H."/>
            <person name="Takenawa T."/>
            <person name="Itoh T."/>
        </authorList>
    </citation>
    <scope>INTERACTION WITH SH3YL1</scope>
</reference>
<reference evidence="29" key="19">
    <citation type="journal article" date="2018" name="Elife">
        <title>Specific Eph receptor-cytoplasmic effector signaling mediated by SAM-SAM domain interactions.</title>
        <authorList>
            <person name="Wang Y."/>
            <person name="Shang Y."/>
            <person name="Li J."/>
            <person name="Chen W."/>
            <person name="Li G."/>
            <person name="Wan J."/>
            <person name="Liu W."/>
            <person name="Zhang M."/>
        </authorList>
    </citation>
    <scope>X-RAY CRYSTALLOGRAPHY (1.50 ANGSTROMS) OF 1200-1257 IN COMPLEX WITH EPHA2</scope>
    <scope>FUNCTION</scope>
    <scope>MUTAGENESIS OF ASP-1222 AND PHE-1226</scope>
</reference>
<protein>
    <recommendedName>
        <fullName evidence="26">Phosphatidylinositol 3,4,5-trisphosphate 5-phosphatase 2</fullName>
        <ecNumber evidence="12">3.1.3.86</ecNumber>
    </recommendedName>
    <alternativeName>
        <fullName evidence="4">Inositol polyphosphate phosphatase-like protein 1</fullName>
        <shortName evidence="4">INPPL-1</shortName>
    </alternativeName>
    <alternativeName>
        <fullName evidence="4">Protein 51C</fullName>
    </alternativeName>
    <alternativeName>
        <fullName evidence="4">SH2 domain-containing inositol 5'-phosphatase 2</fullName>
        <shortName evidence="25">SH2 domain-containing inositol phosphatase 2</shortName>
        <shortName evidence="25">SHIP-2</shortName>
    </alternativeName>
</protein>